<reference key="1">
    <citation type="journal article" date="2007" name="Science">
        <title>Legumes symbioses: absence of nod genes in photosynthetic bradyrhizobia.</title>
        <authorList>
            <person name="Giraud E."/>
            <person name="Moulin L."/>
            <person name="Vallenet D."/>
            <person name="Barbe V."/>
            <person name="Cytryn E."/>
            <person name="Avarre J.-C."/>
            <person name="Jaubert M."/>
            <person name="Simon D."/>
            <person name="Cartieaux F."/>
            <person name="Prin Y."/>
            <person name="Bena G."/>
            <person name="Hannibal L."/>
            <person name="Fardoux J."/>
            <person name="Kojadinovic M."/>
            <person name="Vuillet L."/>
            <person name="Lajus A."/>
            <person name="Cruveiller S."/>
            <person name="Rouy Z."/>
            <person name="Mangenot S."/>
            <person name="Segurens B."/>
            <person name="Dossat C."/>
            <person name="Franck W.L."/>
            <person name="Chang W.-S."/>
            <person name="Saunders E."/>
            <person name="Bruce D."/>
            <person name="Richardson P."/>
            <person name="Normand P."/>
            <person name="Dreyfus B."/>
            <person name="Pignol D."/>
            <person name="Stacey G."/>
            <person name="Emerich D."/>
            <person name="Vermeglio A."/>
            <person name="Medigue C."/>
            <person name="Sadowsky M."/>
        </authorList>
    </citation>
    <scope>NUCLEOTIDE SEQUENCE [LARGE SCALE GENOMIC DNA]</scope>
    <source>
        <strain>ORS 278</strain>
    </source>
</reference>
<keyword id="KW-0067">ATP-binding</keyword>
<keyword id="KW-0315">Glutamine amidotransferase</keyword>
<keyword id="KW-0332">GMP biosynthesis</keyword>
<keyword id="KW-0436">Ligase</keyword>
<keyword id="KW-0547">Nucleotide-binding</keyword>
<keyword id="KW-0658">Purine biosynthesis</keyword>
<keyword id="KW-1185">Reference proteome</keyword>
<comment type="function">
    <text evidence="1">Catalyzes the synthesis of GMP from XMP.</text>
</comment>
<comment type="catalytic activity">
    <reaction evidence="1">
        <text>XMP + L-glutamine + ATP + H2O = GMP + L-glutamate + AMP + diphosphate + 2 H(+)</text>
        <dbReference type="Rhea" id="RHEA:11680"/>
        <dbReference type="ChEBI" id="CHEBI:15377"/>
        <dbReference type="ChEBI" id="CHEBI:15378"/>
        <dbReference type="ChEBI" id="CHEBI:29985"/>
        <dbReference type="ChEBI" id="CHEBI:30616"/>
        <dbReference type="ChEBI" id="CHEBI:33019"/>
        <dbReference type="ChEBI" id="CHEBI:57464"/>
        <dbReference type="ChEBI" id="CHEBI:58115"/>
        <dbReference type="ChEBI" id="CHEBI:58359"/>
        <dbReference type="ChEBI" id="CHEBI:456215"/>
        <dbReference type="EC" id="6.3.5.2"/>
    </reaction>
</comment>
<comment type="pathway">
    <text evidence="1">Purine metabolism; GMP biosynthesis; GMP from XMP (L-Gln route): step 1/1.</text>
</comment>
<comment type="subunit">
    <text evidence="1">Homodimer.</text>
</comment>
<protein>
    <recommendedName>
        <fullName evidence="1">GMP synthase [glutamine-hydrolyzing]</fullName>
        <ecNumber evidence="1">6.3.5.2</ecNumber>
    </recommendedName>
    <alternativeName>
        <fullName evidence="1">GMP synthetase</fullName>
    </alternativeName>
    <alternativeName>
        <fullName evidence="1">Glutamine amidotransferase</fullName>
    </alternativeName>
</protein>
<accession>A4YSU1</accession>
<proteinExistence type="inferred from homology"/>
<name>GUAA_BRASO</name>
<organism>
    <name type="scientific">Bradyrhizobium sp. (strain ORS 278)</name>
    <dbReference type="NCBI Taxonomy" id="114615"/>
    <lineage>
        <taxon>Bacteria</taxon>
        <taxon>Pseudomonadati</taxon>
        <taxon>Pseudomonadota</taxon>
        <taxon>Alphaproteobacteria</taxon>
        <taxon>Hyphomicrobiales</taxon>
        <taxon>Nitrobacteraceae</taxon>
        <taxon>Bradyrhizobium</taxon>
    </lineage>
</organism>
<feature type="chain" id="PRO_1000120224" description="GMP synthase [glutamine-hydrolyzing]">
    <location>
        <begin position="1"/>
        <end position="535"/>
    </location>
</feature>
<feature type="domain" description="Glutamine amidotransferase type-1" evidence="1">
    <location>
        <begin position="24"/>
        <end position="217"/>
    </location>
</feature>
<feature type="domain" description="GMPS ATP-PPase" evidence="1">
    <location>
        <begin position="218"/>
        <end position="410"/>
    </location>
</feature>
<feature type="active site" description="Nucleophile" evidence="1">
    <location>
        <position position="101"/>
    </location>
</feature>
<feature type="active site" evidence="1">
    <location>
        <position position="191"/>
    </location>
</feature>
<feature type="active site" evidence="1">
    <location>
        <position position="193"/>
    </location>
</feature>
<feature type="binding site" evidence="1">
    <location>
        <begin position="245"/>
        <end position="251"/>
    </location>
    <ligand>
        <name>ATP</name>
        <dbReference type="ChEBI" id="CHEBI:30616"/>
    </ligand>
</feature>
<dbReference type="EC" id="6.3.5.2" evidence="1"/>
<dbReference type="EMBL" id="CU234118">
    <property type="protein sequence ID" value="CAL76967.1"/>
    <property type="molecule type" value="Genomic_DNA"/>
</dbReference>
<dbReference type="RefSeq" id="WP_011926132.1">
    <property type="nucleotide sequence ID" value="NC_009445.1"/>
</dbReference>
<dbReference type="SMR" id="A4YSU1"/>
<dbReference type="STRING" id="114615.BRADO3169"/>
<dbReference type="KEGG" id="bra:BRADO3169"/>
<dbReference type="eggNOG" id="COG0518">
    <property type="taxonomic scope" value="Bacteria"/>
</dbReference>
<dbReference type="eggNOG" id="COG0519">
    <property type="taxonomic scope" value="Bacteria"/>
</dbReference>
<dbReference type="HOGENOM" id="CLU_014340_0_5_5"/>
<dbReference type="OrthoDB" id="9802219at2"/>
<dbReference type="UniPathway" id="UPA00189">
    <property type="reaction ID" value="UER00296"/>
</dbReference>
<dbReference type="Proteomes" id="UP000001994">
    <property type="component" value="Chromosome"/>
</dbReference>
<dbReference type="GO" id="GO:0005829">
    <property type="term" value="C:cytosol"/>
    <property type="evidence" value="ECO:0007669"/>
    <property type="project" value="TreeGrafter"/>
</dbReference>
<dbReference type="GO" id="GO:0005524">
    <property type="term" value="F:ATP binding"/>
    <property type="evidence" value="ECO:0007669"/>
    <property type="project" value="UniProtKB-UniRule"/>
</dbReference>
<dbReference type="GO" id="GO:0003921">
    <property type="term" value="F:GMP synthase activity"/>
    <property type="evidence" value="ECO:0007669"/>
    <property type="project" value="InterPro"/>
</dbReference>
<dbReference type="CDD" id="cd01742">
    <property type="entry name" value="GATase1_GMP_Synthase"/>
    <property type="match status" value="1"/>
</dbReference>
<dbReference type="CDD" id="cd01997">
    <property type="entry name" value="GMP_synthase_C"/>
    <property type="match status" value="1"/>
</dbReference>
<dbReference type="FunFam" id="3.30.300.10:FF:000002">
    <property type="entry name" value="GMP synthase [glutamine-hydrolyzing]"/>
    <property type="match status" value="1"/>
</dbReference>
<dbReference type="FunFam" id="3.40.50.620:FF:000001">
    <property type="entry name" value="GMP synthase [glutamine-hydrolyzing]"/>
    <property type="match status" value="1"/>
</dbReference>
<dbReference type="FunFam" id="3.40.50.880:FF:000001">
    <property type="entry name" value="GMP synthase [glutamine-hydrolyzing]"/>
    <property type="match status" value="1"/>
</dbReference>
<dbReference type="Gene3D" id="3.30.300.10">
    <property type="match status" value="1"/>
</dbReference>
<dbReference type="Gene3D" id="3.40.50.880">
    <property type="match status" value="1"/>
</dbReference>
<dbReference type="Gene3D" id="3.40.50.620">
    <property type="entry name" value="HUPs"/>
    <property type="match status" value="1"/>
</dbReference>
<dbReference type="HAMAP" id="MF_00344">
    <property type="entry name" value="GMP_synthase"/>
    <property type="match status" value="1"/>
</dbReference>
<dbReference type="InterPro" id="IPR029062">
    <property type="entry name" value="Class_I_gatase-like"/>
</dbReference>
<dbReference type="InterPro" id="IPR017926">
    <property type="entry name" value="GATASE"/>
</dbReference>
<dbReference type="InterPro" id="IPR001674">
    <property type="entry name" value="GMP_synth_C"/>
</dbReference>
<dbReference type="InterPro" id="IPR004739">
    <property type="entry name" value="GMP_synth_GATase"/>
</dbReference>
<dbReference type="InterPro" id="IPR022955">
    <property type="entry name" value="GMP_synthase"/>
</dbReference>
<dbReference type="InterPro" id="IPR025777">
    <property type="entry name" value="GMPS_ATP_PPase_dom"/>
</dbReference>
<dbReference type="InterPro" id="IPR022310">
    <property type="entry name" value="NAD/GMP_synthase"/>
</dbReference>
<dbReference type="InterPro" id="IPR014729">
    <property type="entry name" value="Rossmann-like_a/b/a_fold"/>
</dbReference>
<dbReference type="NCBIfam" id="TIGR00884">
    <property type="entry name" value="guaA_Cterm"/>
    <property type="match status" value="1"/>
</dbReference>
<dbReference type="NCBIfam" id="TIGR00888">
    <property type="entry name" value="guaA_Nterm"/>
    <property type="match status" value="1"/>
</dbReference>
<dbReference type="NCBIfam" id="NF000848">
    <property type="entry name" value="PRK00074.1"/>
    <property type="match status" value="1"/>
</dbReference>
<dbReference type="PANTHER" id="PTHR11922:SF2">
    <property type="entry name" value="GMP SYNTHASE [GLUTAMINE-HYDROLYZING]"/>
    <property type="match status" value="1"/>
</dbReference>
<dbReference type="PANTHER" id="PTHR11922">
    <property type="entry name" value="GMP SYNTHASE-RELATED"/>
    <property type="match status" value="1"/>
</dbReference>
<dbReference type="Pfam" id="PF00117">
    <property type="entry name" value="GATase"/>
    <property type="match status" value="1"/>
</dbReference>
<dbReference type="Pfam" id="PF00958">
    <property type="entry name" value="GMP_synt_C"/>
    <property type="match status" value="1"/>
</dbReference>
<dbReference type="Pfam" id="PF02540">
    <property type="entry name" value="NAD_synthase"/>
    <property type="match status" value="1"/>
</dbReference>
<dbReference type="PRINTS" id="PR00096">
    <property type="entry name" value="GATASE"/>
</dbReference>
<dbReference type="SUPFAM" id="SSF52402">
    <property type="entry name" value="Adenine nucleotide alpha hydrolases-like"/>
    <property type="match status" value="1"/>
</dbReference>
<dbReference type="SUPFAM" id="SSF52317">
    <property type="entry name" value="Class I glutamine amidotransferase-like"/>
    <property type="match status" value="1"/>
</dbReference>
<dbReference type="SUPFAM" id="SSF54810">
    <property type="entry name" value="GMP synthetase C-terminal dimerisation domain"/>
    <property type="match status" value="1"/>
</dbReference>
<dbReference type="PROSITE" id="PS51273">
    <property type="entry name" value="GATASE_TYPE_1"/>
    <property type="match status" value="1"/>
</dbReference>
<dbReference type="PROSITE" id="PS51553">
    <property type="entry name" value="GMPS_ATP_PPASE"/>
    <property type="match status" value="1"/>
</dbReference>
<sequence>MTAPANNTPAAAATDTSVAALHDKILIVDFGSQVTQLIARRVREDGVYCEIVPFQKAEAAFRQMNPKAVILSGGPESVHEEGSPRAPQLIFESGVPVMGICYGQMTMAAQLGGTVEGGHHREFGRADVEVKTNSLLFDGVWQPGEQHQVWMSHGDRITQMPPGFSVAGVSPNAPFAVIQDEARKYYGLMFHPEVVHTPDGAKLIRNFVRNISGLGGDWTMHAFREEEIKKIRAQVGQGKVICGLSGGVDSAVAAVLIHEAIGDQLTCVFVDHGLLRLNEAETVVDLFRHHYNIPLVHVDASKLFLGELAGVTDPEAKRKTIGRLFIDVFEAEAKKIGGADFLAQGTLYPDVIESVSFTGGPSVTIKSHHNVGGLPARMNMKLVEPLRELFKDEVRVLGRELGLPDVFVGRHPFPGPGLAIRCPGEITTDKLDILRKADAIYIDEIRKAGLYDTIWQAFAVLLPVKTVGVMGDGRTYDYVVGLRAVTSTDGMTADFYPFDMKFLGNTATRIINEVKGVNRVVYDVTSKPPGTIEWE</sequence>
<evidence type="ECO:0000255" key="1">
    <source>
        <dbReference type="HAMAP-Rule" id="MF_00344"/>
    </source>
</evidence>
<gene>
    <name evidence="1" type="primary">guaA</name>
    <name type="ordered locus">BRADO3169</name>
</gene>